<evidence type="ECO:0000255" key="1">
    <source>
        <dbReference type="HAMAP-Rule" id="MF_04200"/>
    </source>
</evidence>
<evidence type="ECO:0000255" key="2">
    <source>
        <dbReference type="PROSITE-ProRule" id="PRU01271"/>
    </source>
</evidence>
<evidence type="ECO:0000255" key="3">
    <source>
        <dbReference type="PROSITE-ProRule" id="PRU01272"/>
    </source>
</evidence>
<organismHost>
    <name type="scientific">Canis lupus familiaris</name>
    <name type="common">Dog</name>
    <name type="synonym">Canis familiaris</name>
    <dbReference type="NCBI Taxonomy" id="9615"/>
</organismHost>
<protein>
    <recommendedName>
        <fullName evidence="1">Spike glycoprotein</fullName>
        <shortName evidence="1">S glycoprotein</shortName>
    </recommendedName>
    <alternativeName>
        <fullName evidence="1">E2</fullName>
    </alternativeName>
    <alternativeName>
        <fullName evidence="1">Peplomer protein</fullName>
    </alternativeName>
</protein>
<proteinExistence type="evidence at protein level"/>
<sequence length="1453" mass="160741">MIVLILCLLLFSYNSVICTSNNDCVQGNVTQLPGNENIIKDFLFHTFKEEPSVVVGGYYPTEVWYNCSRSATTTAYKDFSNIHAFYFDMEAMENSTGNARGKPLLVHVHGDPVSIIIYISAYRDDVQPRPLLKHGLLCITKNKIIDYNTFTSAQWSAICLGDDRKIPFSVIPTDNGTKIFGLEWNDDYVTAYISDRSHHLNINNNWFNNVTILYSRSSSATWQKSAAYVYQGVSNFTYYKLNNTNGLKSYELCEDYEYCTGYATNVFAPTVGGYIPHGFSFNNWFMRTNSSTFVSGRFVTNQPLLVNCLWPVPSFGVAAQQFCFEGAQFSQCNGVSLNNTVDVIRFNLNFTALVQSGMGATVFSLNTTGGVILEISCYNDTVSESSFYSYGEISFGVTDGPRYCFALYNGTALKYLGTLPPSVKEIAISKWGHFYINGYNFFSTFPIDCISFNLTTGDSGAFWTIAYTSYTDALVQVENTAIKKVTYCNSHINNIKCSQLTANLQNGFYPVASSEVGLVNKSVVLLPSFYSHTSVNITIDLGMKRSGYGQPIASTLSNITLPMQDNNTDVYCIRSNRFSVYFHSTCKSSLWDDVFNSDCTDVLYATAVIKTGTCPFSFDKLNNYLTFNKFCLSLNPVGANCKFDVAARTRTNEQVVRSLYVIYEEGDNIVGVPSDNSGLHDLSVLHLDSCTDYNIYGITGVGIIRQTNSTLLSGLYYTSLSGDLLGFKNVSDGVIYSVTPCDVSAHAAVIDGAIVGAMTSINSELLGLTHWTTTPNFYYYSIYNYTNERTRGTAIDSNDVDCEPIITYSNIGVCKNGALVFINVTHSDGDVQPISTGNVTIPTNFTISVQVEYIQVYTTPVSIDCSRYVCNGNPRCNKLLTQYVSACQTIEQALAMGARLENMEIDSMLFVSENALKLASVEAFNSTETLDPIYKEWPNIGGSWLGGLKDILPSHNSKRKYRSAIEDLLFDKVVTSGLGTVDEDYKRCTGGYDIADLVCAQYYNGIMVLPGVANDDKMAMYTASLAGGITLGSLGGGAVSIPFAIAVQARLNYVALQTDVLNKNQQILANAFNQAIGNITQAFGKVNDAIHQTSQGLATVAKVLAKVQDVVNTQGQALSHLTLQLQNNFQAISSSISDIYNRLDELSADAQVDRLITGRLTALNAFVSQTLTRQAEVRASRQLAKDKVNECVRSQSQRFGFCGNGTHLFSLANAAPNGMIFFHTVLLPTAYETVTAWSGICASDGDRTFGLVVKDVQLTLFRNLDDKFYLTPRTMYQPIVATSSDFVQIEGCDVLFVNATVIDLPSIIPDYIDINQTVQDILENFRPNWTVPELPLDIFNATYLNLTGEINDLEFRSEKLHNTTVELAILIDNINNTLVNLEWLNRIETYVKWPWYVWLLIGLVVIFCIPILLFCCCSTGCCGCIGCLGSCCHSICSRRQFESYEPIEKVHVH</sequence>
<keyword id="KW-0002">3D-structure</keyword>
<keyword id="KW-0175">Coiled coil</keyword>
<keyword id="KW-0325">Glycoprotein</keyword>
<keyword id="KW-1043">Host membrane</keyword>
<keyword id="KW-0945">Host-virus interaction</keyword>
<keyword id="KW-0472">Membrane</keyword>
<keyword id="KW-0732">Signal</keyword>
<keyword id="KW-0812">Transmembrane</keyword>
<keyword id="KW-1133">Transmembrane helix</keyword>
<keyword id="KW-1161">Viral attachment to host cell</keyword>
<keyword id="KW-0261">Viral envelope protein</keyword>
<keyword id="KW-0946">Virion</keyword>
<keyword id="KW-0843">Virulence</keyword>
<keyword id="KW-1160">Virus entry into host cell</keyword>
<name>SPIKE_CVCAK</name>
<comment type="function">
    <text evidence="1">S1 region attaches the virion to the cell membrane by interacting with host ANPEP/aminopeptidase N, initiating the infection. Binding to the receptor probably induces conformational changes in the S glycoprotein unmasking the fusion peptide of S2 region and activating membranes fusion. S2 region belongs to the class I viral fusion protein. Under the current model, the protein has at least 3 conformational states: pre-fusion native state, pre-hairpin intermediate state, and post-fusion hairpin state. During viral and target cell membrane fusion, the coiled coil regions (heptad repeats) regions assume a trimer-of-hairpins structure, positioning the fusion peptide in close proximity to the C-terminal region of the ectodomain. The formation of this structure appears to drive apposition and subsequent fusion of viral and target cell membranes.</text>
</comment>
<comment type="subunit">
    <text evidence="1">Homotrimer. During virus morphogenesis, found in a complex with M and HE proteins. Interacts with host ANPEP.</text>
</comment>
<comment type="subcellular location">
    <subcellularLocation>
        <location evidence="1">Virion membrane</location>
        <topology evidence="1">Single-pass type I membrane protein</topology>
    </subcellularLocation>
    <subcellularLocation>
        <location evidence="1">Host endoplasmic reticulum-Golgi intermediate compartment membrane</location>
        <topology evidence="1">Single-pass type I membrane protein</topology>
    </subcellularLocation>
    <text evidence="1">Accumulates in the endoplasmic reticulum-Golgi intermediate compartment, where it participates in virus particle assembly.</text>
</comment>
<comment type="domain">
    <text evidence="1">The KxHxx motif seems to function as an ER retrieval signal.</text>
</comment>
<comment type="similarity">
    <text evidence="1">Belongs to the alphacoronaviruses spike protein family.</text>
</comment>
<comment type="caution">
    <text evidence="1">In contrast to beta- and gammacoronaviruses, S glycoprotein is not cleaved into S1 and S2.</text>
</comment>
<dbReference type="EMBL" id="X77047">
    <property type="protein sequence ID" value="CAA54335.1"/>
    <property type="molecule type" value="mRNA"/>
</dbReference>
<dbReference type="PIR" id="S41453">
    <property type="entry name" value="S41453"/>
</dbReference>
<dbReference type="PDB" id="7DC6">
    <property type="method" value="X-ray"/>
    <property type="resolution" value="2.68 A"/>
    <property type="chains" value="E/F=437-445"/>
</dbReference>
<dbReference type="PDBsum" id="7DC6"/>
<dbReference type="SMR" id="Q65984"/>
<dbReference type="ABCD" id="Q65984">
    <property type="antibodies" value="5 sequenced antibodies"/>
</dbReference>
<dbReference type="GO" id="GO:0044173">
    <property type="term" value="C:host cell endoplasmic reticulum-Golgi intermediate compartment membrane"/>
    <property type="evidence" value="ECO:0007669"/>
    <property type="project" value="UniProtKB-SubCell"/>
</dbReference>
<dbReference type="GO" id="GO:0016020">
    <property type="term" value="C:membrane"/>
    <property type="evidence" value="ECO:0007669"/>
    <property type="project" value="UniProtKB-UniRule"/>
</dbReference>
<dbReference type="GO" id="GO:0019031">
    <property type="term" value="C:viral envelope"/>
    <property type="evidence" value="ECO:0007669"/>
    <property type="project" value="UniProtKB-UniRule"/>
</dbReference>
<dbReference type="GO" id="GO:0055036">
    <property type="term" value="C:virion membrane"/>
    <property type="evidence" value="ECO:0007669"/>
    <property type="project" value="UniProtKB-SubCell"/>
</dbReference>
<dbReference type="GO" id="GO:0075509">
    <property type="term" value="P:endocytosis involved in viral entry into host cell"/>
    <property type="evidence" value="ECO:0007669"/>
    <property type="project" value="UniProtKB-UniRule"/>
</dbReference>
<dbReference type="GO" id="GO:0039654">
    <property type="term" value="P:fusion of virus membrane with host endosome membrane"/>
    <property type="evidence" value="ECO:0007669"/>
    <property type="project" value="UniProtKB-UniRule"/>
</dbReference>
<dbReference type="GO" id="GO:0019064">
    <property type="term" value="P:fusion of virus membrane with host plasma membrane"/>
    <property type="evidence" value="ECO:0007669"/>
    <property type="project" value="UniProtKB-UniRule"/>
</dbReference>
<dbReference type="GO" id="GO:0046813">
    <property type="term" value="P:receptor-mediated virion attachment to host cell"/>
    <property type="evidence" value="ECO:0007669"/>
    <property type="project" value="UniProtKB-UniRule"/>
</dbReference>
<dbReference type="CDD" id="cd22377">
    <property type="entry name" value="TGEV-like_Spike_SD1-2_S1-S2_S2"/>
    <property type="match status" value="1"/>
</dbReference>
<dbReference type="Gene3D" id="1.20.5.300">
    <property type="match status" value="2"/>
</dbReference>
<dbReference type="Gene3D" id="2.60.40.3130">
    <property type="match status" value="1"/>
</dbReference>
<dbReference type="HAMAP" id="MF_04200">
    <property type="entry name" value="ALPHA_CORONA_SPIKE"/>
    <property type="match status" value="1"/>
</dbReference>
<dbReference type="InterPro" id="IPR042552">
    <property type="entry name" value="ALPHA_CORONA_SPIKE"/>
</dbReference>
<dbReference type="InterPro" id="IPR043607">
    <property type="entry name" value="CoV_S1_C"/>
</dbReference>
<dbReference type="InterPro" id="IPR043473">
    <property type="entry name" value="S2_sf_CoV"/>
</dbReference>
<dbReference type="InterPro" id="IPR002551">
    <property type="entry name" value="Spike_S1_CoV"/>
</dbReference>
<dbReference type="InterPro" id="IPR002552">
    <property type="entry name" value="Spike_S2_CoV"/>
</dbReference>
<dbReference type="InterPro" id="IPR043614">
    <property type="entry name" value="Spike_S2_CoV_C"/>
</dbReference>
<dbReference type="InterPro" id="IPR044873">
    <property type="entry name" value="Spike_S2_CoV_HR1"/>
</dbReference>
<dbReference type="InterPro" id="IPR044874">
    <property type="entry name" value="Spike_S2_CoV_HR2"/>
</dbReference>
<dbReference type="Pfam" id="PF01600">
    <property type="entry name" value="CoV_S1"/>
    <property type="match status" value="1"/>
</dbReference>
<dbReference type="Pfam" id="PF19209">
    <property type="entry name" value="CoV_S1_C"/>
    <property type="match status" value="1"/>
</dbReference>
<dbReference type="Pfam" id="PF01601">
    <property type="entry name" value="CoV_S2"/>
    <property type="match status" value="1"/>
</dbReference>
<dbReference type="Pfam" id="PF19214">
    <property type="entry name" value="CoV_S2_C"/>
    <property type="match status" value="1"/>
</dbReference>
<dbReference type="SUPFAM" id="SSF111474">
    <property type="entry name" value="Coronavirus S2 glycoprotein"/>
    <property type="match status" value="2"/>
</dbReference>
<dbReference type="PROSITE" id="PS51923">
    <property type="entry name" value="COV_S2_HR1"/>
    <property type="match status" value="1"/>
</dbReference>
<dbReference type="PROSITE" id="PS51924">
    <property type="entry name" value="COV_S2_HR2"/>
    <property type="match status" value="1"/>
</dbReference>
<gene>
    <name evidence="1" type="primary">S</name>
</gene>
<reference key="1">
    <citation type="journal article" date="1994" name="J. Gen. Virol.">
        <title>Nucleotide sequence and expression of the spike (S) gene of canine coronavirus and comparison with the S proteins of feline and swine coronaviruses.</title>
        <authorList>
            <person name="Wesseling J.G."/>
            <person name="Vennema H."/>
            <person name="Godeke G.J."/>
            <person name="Spaan W.J.M."/>
            <person name="Horzinek M.C."/>
            <person name="Rottier P.J.M."/>
        </authorList>
    </citation>
    <scope>NUCLEOTIDE SEQUENCE [MRNA]</scope>
</reference>
<feature type="signal peptide" evidence="1">
    <location>
        <begin position="1"/>
        <end position="31"/>
    </location>
</feature>
<feature type="chain" id="PRO_0000042720" description="Spike glycoprotein" evidence="1">
    <location>
        <begin position="32"/>
        <end position="1453"/>
    </location>
</feature>
<feature type="topological domain" description="Virion surface" evidence="1">
    <location>
        <begin position="32"/>
        <end position="1394"/>
    </location>
</feature>
<feature type="transmembrane region" description="Helical" evidence="1">
    <location>
        <begin position="1395"/>
        <end position="1414"/>
    </location>
</feature>
<feature type="topological domain" description="Intravirion" evidence="1">
    <location>
        <begin position="1415"/>
        <end position="1453"/>
    </location>
</feature>
<feature type="region of interest" description="S1">
    <location>
        <begin position="19"/>
        <end position="791"/>
    </location>
</feature>
<feature type="region of interest" description="S1" evidence="1">
    <location>
        <begin position="32"/>
        <end position="780"/>
    </location>
</feature>
<feature type="region of interest" description="Interaction with host ANPEP" evidence="1">
    <location>
        <begin position="661"/>
        <end position="805"/>
    </location>
</feature>
<feature type="region of interest" description="S2" evidence="1">
    <location>
        <begin position="781"/>
        <end position="1453"/>
    </location>
</feature>
<feature type="region of interest" description="S2">
    <location>
        <begin position="794"/>
        <end position="1453"/>
    </location>
</feature>
<feature type="region of interest" description="Fusion peptide" evidence="1">
    <location>
        <begin position="1026"/>
        <end position="1047"/>
    </location>
</feature>
<feature type="region of interest" description="Heptad repeat 1 (HR1)" evidence="2">
    <location>
        <begin position="1041"/>
        <end position="1160"/>
    </location>
</feature>
<feature type="region of interest" description="Heptad repeat 2 (HR2)" evidence="3">
    <location>
        <begin position="1309"/>
        <end position="1406"/>
    </location>
</feature>
<feature type="coiled-coil region" evidence="1">
    <location>
        <begin position="1108"/>
        <end position="1152"/>
    </location>
</feature>
<feature type="coiled-coil region" evidence="1">
    <location>
        <begin position="1342"/>
        <end position="1384"/>
    </location>
</feature>
<feature type="short sequence motif" description="KxHxx" evidence="1">
    <location>
        <begin position="1449"/>
        <end position="1453"/>
    </location>
</feature>
<accession>Q65984</accession>
<organism>
    <name type="scientific">Canine coronavirus (strain K378)</name>
    <name type="common">CCoV</name>
    <name type="synonym">Canine enteric coronavirus</name>
    <dbReference type="NCBI Taxonomy" id="33732"/>
    <lineage>
        <taxon>Viruses</taxon>
        <taxon>Riboviria</taxon>
        <taxon>Orthornavirae</taxon>
        <taxon>Pisuviricota</taxon>
        <taxon>Pisoniviricetes</taxon>
        <taxon>Nidovirales</taxon>
        <taxon>Cornidovirineae</taxon>
        <taxon>Coronaviridae</taxon>
        <taxon>Orthocoronavirinae</taxon>
        <taxon>Alphacoronavirus</taxon>
        <taxon>Tegacovirus</taxon>
        <taxon>Alphacoronavirus 1</taxon>
    </lineage>
</organism>